<protein>
    <recommendedName>
        <fullName evidence="4">Centrosomal protein of 295 kDa</fullName>
    </recommendedName>
</protein>
<feature type="chain" id="PRO_0000324597" description="Centrosomal protein of 295 kDa">
    <location>
        <begin position="1"/>
        <end position="2395"/>
    </location>
</feature>
<feature type="region of interest" description="Necessary for centriole targeting and microtubule association" evidence="1">
    <location>
        <begin position="1"/>
        <end position="540"/>
    </location>
</feature>
<feature type="region of interest" description="Disordered" evidence="3">
    <location>
        <begin position="602"/>
        <end position="643"/>
    </location>
</feature>
<feature type="region of interest" description="Disordered" evidence="3">
    <location>
        <begin position="660"/>
        <end position="681"/>
    </location>
</feature>
<feature type="region of interest" description="Disordered" evidence="3">
    <location>
        <begin position="735"/>
        <end position="764"/>
    </location>
</feature>
<feature type="region of interest" description="Disordered" evidence="3">
    <location>
        <begin position="864"/>
        <end position="893"/>
    </location>
</feature>
<feature type="region of interest" description="Disordered" evidence="3">
    <location>
        <begin position="966"/>
        <end position="986"/>
    </location>
</feature>
<feature type="region of interest" description="Disordered" evidence="3">
    <location>
        <begin position="1212"/>
        <end position="1272"/>
    </location>
</feature>
<feature type="region of interest" description="Disordered" evidence="3">
    <location>
        <begin position="1677"/>
        <end position="1715"/>
    </location>
</feature>
<feature type="region of interest" description="Disordered" evidence="3">
    <location>
        <begin position="1819"/>
        <end position="1845"/>
    </location>
</feature>
<feature type="region of interest" description="Disordered" evidence="3">
    <location>
        <begin position="1875"/>
        <end position="1899"/>
    </location>
</feature>
<feature type="region of interest" description="Disordered" evidence="3">
    <location>
        <begin position="1989"/>
        <end position="2013"/>
    </location>
</feature>
<feature type="region of interest" description="ALMS motif">
    <location>
        <begin position="2329"/>
        <end position="2395"/>
    </location>
</feature>
<feature type="region of interest" description="Disordered" evidence="3">
    <location>
        <begin position="2354"/>
        <end position="2395"/>
    </location>
</feature>
<feature type="coiled-coil region" evidence="2">
    <location>
        <begin position="53"/>
        <end position="84"/>
    </location>
</feature>
<feature type="coiled-coil region" evidence="2">
    <location>
        <begin position="114"/>
        <end position="148"/>
    </location>
</feature>
<feature type="coiled-coil region" evidence="2">
    <location>
        <begin position="209"/>
        <end position="277"/>
    </location>
</feature>
<feature type="coiled-coil region" evidence="2">
    <location>
        <begin position="488"/>
        <end position="538"/>
    </location>
</feature>
<feature type="coiled-coil region" evidence="2">
    <location>
        <begin position="567"/>
        <end position="592"/>
    </location>
</feature>
<feature type="coiled-coil region" evidence="2">
    <location>
        <begin position="817"/>
        <end position="848"/>
    </location>
</feature>
<feature type="coiled-coil region" evidence="2">
    <location>
        <begin position="1444"/>
        <end position="1488"/>
    </location>
</feature>
<feature type="compositionally biased region" description="Low complexity" evidence="3">
    <location>
        <begin position="735"/>
        <end position="750"/>
    </location>
</feature>
<feature type="compositionally biased region" description="Polar residues" evidence="3">
    <location>
        <begin position="1219"/>
        <end position="1250"/>
    </location>
</feature>
<feature type="compositionally biased region" description="Low complexity" evidence="3">
    <location>
        <begin position="1677"/>
        <end position="1692"/>
    </location>
</feature>
<feature type="compositionally biased region" description="Basic and acidic residues" evidence="3">
    <location>
        <begin position="1697"/>
        <end position="1710"/>
    </location>
</feature>
<feature type="compositionally biased region" description="Basic and acidic residues" evidence="3">
    <location>
        <begin position="1880"/>
        <end position="1894"/>
    </location>
</feature>
<feature type="compositionally biased region" description="Basic and acidic residues" evidence="3">
    <location>
        <begin position="2376"/>
        <end position="2388"/>
    </location>
</feature>
<feature type="modified residue" description="Phosphoserine" evidence="1">
    <location>
        <position position="13"/>
    </location>
</feature>
<feature type="modified residue" description="Phosphoserine" evidence="1">
    <location>
        <position position="634"/>
    </location>
</feature>
<feature type="modified residue" description="Phosphoserine" evidence="1">
    <location>
        <position position="1565"/>
    </location>
</feature>
<accession>A4L9P8</accession>
<keyword id="KW-0970">Cilium biogenesis/degradation</keyword>
<keyword id="KW-0175">Coiled coil</keyword>
<keyword id="KW-0963">Cytoplasm</keyword>
<keyword id="KW-0206">Cytoskeleton</keyword>
<keyword id="KW-0597">Phosphoprotein</keyword>
<keyword id="KW-1185">Reference proteome</keyword>
<gene>
    <name evidence="1" type="primary">Cep295</name>
</gene>
<proteinExistence type="evidence at transcript level"/>
<sequence>MKRKVMNGKLRLSPNEEAFILKEDYERRRKLRLLQVREQERGIAFQIREDIKQRRNQQVSHLAEELRAEWEEAQSQKIQNLEKLYLASLRHMGDGHQQAKENEPDLDALSRRAAERKTKAEARHKEALKAQKKQKEMLMKQKTRHIKARKEAVLVEKERSAKMARLPPPVPSPFENIDINRIPSLKTNRSTYHHISAFVSRQMGTKQPDAHLAAEEEARRVERLRKQAAQERMEQSERAHARGSQAMKKIHLAQNQERLMEELKQLQREDLACKRQTAAQMPSQLLELPYRRSEMKEDWQRELEFAFEDVYSADRKVKGNLILHLKPEPLPTMSDQLQDEELDLSMEQENEVPLATKTQQIPSRILLKRLLNKIRNQKSLWTIKSFSEDDNQVTASIISEIERKVPSTDSGTITTGETAVSFEQEQVMGSDRLMIESGPPSSEDKPLCYKSVTGKEQAMGVSPPATTVAQSSVLLHPQEEAARLRMSARHKQIMEIEEQKQKQLELLEQIEQQKLRLETDCFQAQLEETRKQADHLEVRPAPVSHAMISDEERHRQMIRNYQYQLLQQNRLHKQTVETARKRLLEYQTVLKERCPSMSARSLIPDSVVSEPPQQAQKPAVASDYWDPSQRPKLSPSKYQPVQPSQIPALDQNHIQVPRQGHIPQRQGETARAKQSVESQERQWQFSQVETQQRDYEFIFKDSHSLSRTSSYVRPQTLQAAGEVSKPLRAIICQTSDSQQISSEDSENISSKPTEPSSSLPLMPECSSSSLSVKLESETIQKAFTTVNRSVISQMHGQPLSSSETGTTQQGDIRFLQGQLELQKKVLQERQEAQEKLLSCTQKELEEQTGIPVFFPSPVGNMFSSLPSASAESGNIQTSSTKSDATVSSDSMDNPYSQPISLRQTNLEFLQEQFSVEKDNLQARREAQEVSFTHTQSKLDKIVRSEQTGSSWPQLVALESFSSLTSADTQSRKIQKPPLPTNKKGLLPSQSEILSSQDGSSGFLQQTLPLQNTLKLLQEQLTIQRGMIQPRLNAQETLLLHKERCSVDSKAGPVNSLSSAVAQHSEAGPQSLQELYSSKKENTVLSSHLITPEVQEESHGSPQHSLPRQEHFASLQEQAHIQRVILGARKQIQEFAHKQNEFKKGLYSQQTGALSSPSQGTGWEISQESLSVRSDSTDPLSHFKIPGFQERLVRALQPTFPLRDNLQEHQEWVDPEKESFQFSPQTQENRSSQQTGFSSFTPSLRQPSCVSLPSVDSGITQHPLSTERDSKVTSSHLQIPELQHRLLKISQLIQPQQDSLKALQEQLATSRTIIHSRQEALEETLREWKEKIFPEQVGPFSPLMTQHSFASFPVSDIERAQELCSTNSEGAISSGYSEMLELPDRALGLSCTALPQQGNLTVHPGHLHAQTNSFHSTEKAQEKLVFPRPCKLEEISAEHSIQPPHDDLQALQQQLDVHREAIRSCQDIQEELLLQRLNKLEQRVSSKQISSSPLLSQVALPIANSEGTLQSSPAKNDDTEMLRSHSEYLNFSQPLQDNVTEQLDLEVVFHKELLLHKQKSQTKSESPEHAAPFNDAVIPRLQDRLLSYFQPALTQQDSMSPQKQLNLQREALYSRQKAQEELLVQRQTALQQQVQKHRETLKGFSNVSQTRAASGENDLEMQKTEQLTGWFPHIQGWPWGDSSQGSSSGDQPGAAAVHAEHSGESLGKELSGRASKPPVSKVKCVFDLNQHELSTIQEVESPTSGRTSMPGKAEFYRDRDPLRVSVSREQSYLGSPVAHDPFGCHQPSVQENSKSHDTAKAVKVKKSDIEDHALLSHAISEEEEEEEACTNLSPLMKPDDEVETQEISQELLSSMTVSTGSFLSYEITDLSLTDPESFSEQTEHQEQESSSKEEETGSLSCAVPSTQVTYQQQHSLGAHNSLLPTEEENASDQTHVHQIIDKDINEANLIPDKRDFQVPAVDLDFPELEHLFPHLHRQLFKPLEPHLDLDLSSPGTSQEDRDFYQQNSESSSEKHVKALSTSTLCFTALTAGSHSPNSRLNQQLDVNLAHATTEGSEQSFQQLLPEFSSQESQHTDLPSIYSIEARGTSQSMENQNYSEILQNKKKSIYFQPSTENLSPACSSSDTTLFDQLHPQHSTPCGSVSSEGSVKQLEGREEMLGFEELSRRAVPMSQRLTEDENVVLPINPYVGTVEMETSIQGSNSLSIQNEKPIQNVIKTETTKAVRNVCQLAQEEHMLKSESCPFRRPIPVWETETGYGIMEEPDLTLLSTSDISITDTDLANLTIEDNEAQCSQAGAVQPSSSVETTFCGAASEPWADQPTVASSAIPGSLGEAFMKRKKTFMERSYQRQREIWNKTPLPQAKVSKEKLSTSSSLSHLKEAVSGDETAKRNRSQCI</sequence>
<comment type="function">
    <text evidence="1">Centriole-enriched microtubule-binding protein involved in centriole biogenesis. Essential for the generation of the distal portion of new-born centrioles in a CPAP- and CEP120-mediated elongation dependent manner during the cell cycle S/G2 phase after formation of the initiating cartwheel structure. Required for the recruitment of centriolar proteins, such as POC1B, POC5 and CEP135, into the distal portion of centrioles. Also required for centriole-to-centrosome conversion during mitotic progression, but is dispensable for cartwheel removal or centriole disengagement. Binds to and stabilizes centriolar microtubule. May be involved in ciliogenesis.</text>
</comment>
<comment type="subunit">
    <text evidence="1">Interacts (via ALMS motif) with microtubules; this interaction is direct.</text>
</comment>
<comment type="subcellular location">
    <subcellularLocation>
        <location evidence="1">Cytoplasm</location>
        <location evidence="1">Cytoskeleton</location>
        <location evidence="1">Microtubule organizing center</location>
        <location evidence="1">Centrosome</location>
        <location evidence="1">Centriole</location>
    </subcellularLocation>
    <subcellularLocation>
        <location evidence="1">Cytoplasm</location>
        <location evidence="1">Cytoskeleton</location>
        <location evidence="1">Microtubule organizing center</location>
        <location evidence="1">Centrosome</location>
    </subcellularLocation>
    <subcellularLocation>
        <location evidence="1">Cytoplasm</location>
        <location evidence="1">Cytoskeleton</location>
        <location evidence="1">Spindle</location>
    </subcellularLocation>
    <subcellularLocation>
        <location evidence="1">Cytoplasm</location>
        <location evidence="1">Cytoskeleton</location>
    </subcellularLocation>
    <text evidence="1">Associates with both of the converted centrioles during G1 but becomes more enriched at the newly formed daughter (or unconverted) centrioles during S, G2, and early M phases. In early S phase, localized at the procentriolar microtubule wall and enriched at the proximal ends of the centrioles in CPAP- and CEP135-dependent manner. Colocalizes with SASS6 and CEP250 proteins. Colocalizes with CEP135 and CEP192 at the centrosomes. Associates with interphase microtubules and mitotic spindles. Colocalizes with centriolar acetylated tubulin.</text>
</comment>
<comment type="domain">
    <text evidence="1">The N-terminal and the ALMS motif-containing C-terminal regions are essential for CEP295-mediated centriole elongation.</text>
</comment>
<dbReference type="EMBL" id="AABR03062369">
    <property type="status" value="NOT_ANNOTATED_CDS"/>
    <property type="molecule type" value="Genomic_DNA"/>
</dbReference>
<dbReference type="EMBL" id="EF460314">
    <property type="protein sequence ID" value="ABO47656.1"/>
    <property type="molecule type" value="mRNA"/>
</dbReference>
<dbReference type="SMR" id="A4L9P8"/>
<dbReference type="FunCoup" id="A4L9P8">
    <property type="interactions" value="1758"/>
</dbReference>
<dbReference type="STRING" id="10116.ENSRNOP00000074090"/>
<dbReference type="GlyGen" id="A4L9P8">
    <property type="glycosylation" value="1 site"/>
</dbReference>
<dbReference type="iPTMnet" id="A4L9P8"/>
<dbReference type="PhosphoSitePlus" id="A4L9P8"/>
<dbReference type="PaxDb" id="10116-ENSRNOP00000029431"/>
<dbReference type="UCSC" id="RGD:1311723">
    <property type="organism name" value="rat"/>
</dbReference>
<dbReference type="AGR" id="RGD:1311723"/>
<dbReference type="RGD" id="1311723">
    <property type="gene designation" value="Cep295"/>
</dbReference>
<dbReference type="VEuPathDB" id="HostDB:ENSRNOG00000010999"/>
<dbReference type="eggNOG" id="ENOG502QSZR">
    <property type="taxonomic scope" value="Eukaryota"/>
</dbReference>
<dbReference type="InParanoid" id="A4L9P8"/>
<dbReference type="PhylomeDB" id="A4L9P8"/>
<dbReference type="TreeFam" id="TF331536"/>
<dbReference type="PRO" id="PR:A4L9P8"/>
<dbReference type="Proteomes" id="UP000002494">
    <property type="component" value="Chromosome 8"/>
</dbReference>
<dbReference type="Bgee" id="ENSRNOG00000010999">
    <property type="expression patterns" value="Expressed in testis and 20 other cell types or tissues"/>
</dbReference>
<dbReference type="ExpressionAtlas" id="A4L9P8">
    <property type="expression patterns" value="baseline and differential"/>
</dbReference>
<dbReference type="GO" id="GO:0005814">
    <property type="term" value="C:centriole"/>
    <property type="evidence" value="ECO:0000250"/>
    <property type="project" value="UniProtKB"/>
</dbReference>
<dbReference type="GO" id="GO:0005813">
    <property type="term" value="C:centrosome"/>
    <property type="evidence" value="ECO:0000250"/>
    <property type="project" value="UniProtKB"/>
</dbReference>
<dbReference type="GO" id="GO:0005737">
    <property type="term" value="C:cytoplasm"/>
    <property type="evidence" value="ECO:0000266"/>
    <property type="project" value="RGD"/>
</dbReference>
<dbReference type="GO" id="GO:0005856">
    <property type="term" value="C:cytoskeleton"/>
    <property type="evidence" value="ECO:0000266"/>
    <property type="project" value="RGD"/>
</dbReference>
<dbReference type="GO" id="GO:0005829">
    <property type="term" value="C:cytosol"/>
    <property type="evidence" value="ECO:0000318"/>
    <property type="project" value="GO_Central"/>
</dbReference>
<dbReference type="GO" id="GO:1990498">
    <property type="term" value="C:mitotic spindle microtubule"/>
    <property type="evidence" value="ECO:0000250"/>
    <property type="project" value="UniProtKB"/>
</dbReference>
<dbReference type="GO" id="GO:0008017">
    <property type="term" value="F:microtubule binding"/>
    <property type="evidence" value="ECO:0000250"/>
    <property type="project" value="UniProtKB"/>
</dbReference>
<dbReference type="GO" id="GO:0030030">
    <property type="term" value="P:cell projection organization"/>
    <property type="evidence" value="ECO:0007669"/>
    <property type="project" value="UniProtKB-KW"/>
</dbReference>
<dbReference type="GO" id="GO:0007099">
    <property type="term" value="P:centriole replication"/>
    <property type="evidence" value="ECO:0000250"/>
    <property type="project" value="UniProtKB"/>
</dbReference>
<dbReference type="GO" id="GO:1903724">
    <property type="term" value="P:positive regulation of centriole elongation"/>
    <property type="evidence" value="ECO:0000250"/>
    <property type="project" value="UniProtKB"/>
</dbReference>
<dbReference type="GO" id="GO:0010825">
    <property type="term" value="P:positive regulation of centrosome duplication"/>
    <property type="evidence" value="ECO:0000250"/>
    <property type="project" value="UniProtKB"/>
</dbReference>
<dbReference type="GO" id="GO:1904951">
    <property type="term" value="P:positive regulation of establishment of protein localization"/>
    <property type="evidence" value="ECO:0000250"/>
    <property type="project" value="UniProtKB"/>
</dbReference>
<dbReference type="GO" id="GO:1901985">
    <property type="term" value="P:positive regulation of protein acetylation"/>
    <property type="evidence" value="ECO:0000250"/>
    <property type="project" value="UniProtKB"/>
</dbReference>
<dbReference type="GO" id="GO:0046599">
    <property type="term" value="P:regulation of centriole replication"/>
    <property type="evidence" value="ECO:0000318"/>
    <property type="project" value="GO_Central"/>
</dbReference>
<dbReference type="PANTHER" id="PTHR21553">
    <property type="entry name" value="ALMS1-RELATED"/>
    <property type="match status" value="1"/>
</dbReference>
<dbReference type="PANTHER" id="PTHR21553:SF25">
    <property type="entry name" value="CENTROSOMAL PROTEIN OF 295 KDA"/>
    <property type="match status" value="1"/>
</dbReference>
<name>CE295_RAT</name>
<organism>
    <name type="scientific">Rattus norvegicus</name>
    <name type="common">Rat</name>
    <dbReference type="NCBI Taxonomy" id="10116"/>
    <lineage>
        <taxon>Eukaryota</taxon>
        <taxon>Metazoa</taxon>
        <taxon>Chordata</taxon>
        <taxon>Craniata</taxon>
        <taxon>Vertebrata</taxon>
        <taxon>Euteleostomi</taxon>
        <taxon>Mammalia</taxon>
        <taxon>Eutheria</taxon>
        <taxon>Euarchontoglires</taxon>
        <taxon>Glires</taxon>
        <taxon>Rodentia</taxon>
        <taxon>Myomorpha</taxon>
        <taxon>Muroidea</taxon>
        <taxon>Muridae</taxon>
        <taxon>Murinae</taxon>
        <taxon>Rattus</taxon>
    </lineage>
</organism>
<evidence type="ECO:0000250" key="1">
    <source>
        <dbReference type="UniProtKB" id="Q9C0D2"/>
    </source>
</evidence>
<evidence type="ECO:0000255" key="2"/>
<evidence type="ECO:0000256" key="3">
    <source>
        <dbReference type="SAM" id="MobiDB-lite"/>
    </source>
</evidence>
<evidence type="ECO:0000305" key="4"/>
<reference key="1">
    <citation type="journal article" date="2004" name="Nature">
        <title>Genome sequence of the Brown Norway rat yields insights into mammalian evolution.</title>
        <authorList>
            <person name="Gibbs R.A."/>
            <person name="Weinstock G.M."/>
            <person name="Metzker M.L."/>
            <person name="Muzny D.M."/>
            <person name="Sodergren E.J."/>
            <person name="Scherer S."/>
            <person name="Scott G."/>
            <person name="Steffen D."/>
            <person name="Worley K.C."/>
            <person name="Burch P.E."/>
            <person name="Okwuonu G."/>
            <person name="Hines S."/>
            <person name="Lewis L."/>
            <person name="Deramo C."/>
            <person name="Delgado O."/>
            <person name="Dugan-Rocha S."/>
            <person name="Miner G."/>
            <person name="Morgan M."/>
            <person name="Hawes A."/>
            <person name="Gill R."/>
            <person name="Holt R.A."/>
            <person name="Adams M.D."/>
            <person name="Amanatides P.G."/>
            <person name="Baden-Tillson H."/>
            <person name="Barnstead M."/>
            <person name="Chin S."/>
            <person name="Evans C.A."/>
            <person name="Ferriera S."/>
            <person name="Fosler C."/>
            <person name="Glodek A."/>
            <person name="Gu Z."/>
            <person name="Jennings D."/>
            <person name="Kraft C.L."/>
            <person name="Nguyen T."/>
            <person name="Pfannkoch C.M."/>
            <person name="Sitter C."/>
            <person name="Sutton G.G."/>
            <person name="Venter J.C."/>
            <person name="Woodage T."/>
            <person name="Smith D."/>
            <person name="Lee H.-M."/>
            <person name="Gustafson E."/>
            <person name="Cahill P."/>
            <person name="Kana A."/>
            <person name="Doucette-Stamm L."/>
            <person name="Weinstock K."/>
            <person name="Fechtel K."/>
            <person name="Weiss R.B."/>
            <person name="Dunn D.M."/>
            <person name="Green E.D."/>
            <person name="Blakesley R.W."/>
            <person name="Bouffard G.G."/>
            <person name="De Jong P.J."/>
            <person name="Osoegawa K."/>
            <person name="Zhu B."/>
            <person name="Marra M."/>
            <person name="Schein J."/>
            <person name="Bosdet I."/>
            <person name="Fjell C."/>
            <person name="Jones S."/>
            <person name="Krzywinski M."/>
            <person name="Mathewson C."/>
            <person name="Siddiqui A."/>
            <person name="Wye N."/>
            <person name="McPherson J."/>
            <person name="Zhao S."/>
            <person name="Fraser C.M."/>
            <person name="Shetty J."/>
            <person name="Shatsman S."/>
            <person name="Geer K."/>
            <person name="Chen Y."/>
            <person name="Abramzon S."/>
            <person name="Nierman W.C."/>
            <person name="Havlak P.H."/>
            <person name="Chen R."/>
            <person name="Durbin K.J."/>
            <person name="Egan A."/>
            <person name="Ren Y."/>
            <person name="Song X.-Z."/>
            <person name="Li B."/>
            <person name="Liu Y."/>
            <person name="Qin X."/>
            <person name="Cawley S."/>
            <person name="Cooney A.J."/>
            <person name="D'Souza L.M."/>
            <person name="Martin K."/>
            <person name="Wu J.Q."/>
            <person name="Gonzalez-Garay M.L."/>
            <person name="Jackson A.R."/>
            <person name="Kalafus K.J."/>
            <person name="McLeod M.P."/>
            <person name="Milosavljevic A."/>
            <person name="Virk D."/>
            <person name="Volkov A."/>
            <person name="Wheeler D.A."/>
            <person name="Zhang Z."/>
            <person name="Bailey J.A."/>
            <person name="Eichler E.E."/>
            <person name="Tuzun E."/>
            <person name="Birney E."/>
            <person name="Mongin E."/>
            <person name="Ureta-Vidal A."/>
            <person name="Woodwark C."/>
            <person name="Zdobnov E."/>
            <person name="Bork P."/>
            <person name="Suyama M."/>
            <person name="Torrents D."/>
            <person name="Alexandersson M."/>
            <person name="Trask B.J."/>
            <person name="Young J.M."/>
            <person name="Huang H."/>
            <person name="Wang H."/>
            <person name="Xing H."/>
            <person name="Daniels S."/>
            <person name="Gietzen D."/>
            <person name="Schmidt J."/>
            <person name="Stevens K."/>
            <person name="Vitt U."/>
            <person name="Wingrove J."/>
            <person name="Camara F."/>
            <person name="Mar Alba M."/>
            <person name="Abril J.F."/>
            <person name="Guigo R."/>
            <person name="Smit A."/>
            <person name="Dubchak I."/>
            <person name="Rubin E.M."/>
            <person name="Couronne O."/>
            <person name="Poliakov A."/>
            <person name="Huebner N."/>
            <person name="Ganten D."/>
            <person name="Goesele C."/>
            <person name="Hummel O."/>
            <person name="Kreitler T."/>
            <person name="Lee Y.-A."/>
            <person name="Monti J."/>
            <person name="Schulz H."/>
            <person name="Zimdahl H."/>
            <person name="Himmelbauer H."/>
            <person name="Lehrach H."/>
            <person name="Jacob H.J."/>
            <person name="Bromberg S."/>
            <person name="Gullings-Handley J."/>
            <person name="Jensen-Seaman M.I."/>
            <person name="Kwitek A.E."/>
            <person name="Lazar J."/>
            <person name="Pasko D."/>
            <person name="Tonellato P.J."/>
            <person name="Twigger S."/>
            <person name="Ponting C.P."/>
            <person name="Duarte J.M."/>
            <person name="Rice S."/>
            <person name="Goodstadt L."/>
            <person name="Beatson S.A."/>
            <person name="Emes R.D."/>
            <person name="Winter E.E."/>
            <person name="Webber C."/>
            <person name="Brandt P."/>
            <person name="Nyakatura G."/>
            <person name="Adetobi M."/>
            <person name="Chiaromonte F."/>
            <person name="Elnitski L."/>
            <person name="Eswara P."/>
            <person name="Hardison R.C."/>
            <person name="Hou M."/>
            <person name="Kolbe D."/>
            <person name="Makova K."/>
            <person name="Miller W."/>
            <person name="Nekrutenko A."/>
            <person name="Riemer C."/>
            <person name="Schwartz S."/>
            <person name="Taylor J."/>
            <person name="Yang S."/>
            <person name="Zhang Y."/>
            <person name="Lindpaintner K."/>
            <person name="Andrews T.D."/>
            <person name="Caccamo M."/>
            <person name="Clamp M."/>
            <person name="Clarke L."/>
            <person name="Curwen V."/>
            <person name="Durbin R.M."/>
            <person name="Eyras E."/>
            <person name="Searle S.M."/>
            <person name="Cooper G.M."/>
            <person name="Batzoglou S."/>
            <person name="Brudno M."/>
            <person name="Sidow A."/>
            <person name="Stone E.A."/>
            <person name="Payseur B.A."/>
            <person name="Bourque G."/>
            <person name="Lopez-Otin C."/>
            <person name="Puente X.S."/>
            <person name="Chakrabarti K."/>
            <person name="Chatterji S."/>
            <person name="Dewey C."/>
            <person name="Pachter L."/>
            <person name="Bray N."/>
            <person name="Yap V.B."/>
            <person name="Caspi A."/>
            <person name="Tesler G."/>
            <person name="Pevzner P.A."/>
            <person name="Haussler D."/>
            <person name="Roskin K.M."/>
            <person name="Baertsch R."/>
            <person name="Clawson H."/>
            <person name="Furey T.S."/>
            <person name="Hinrichs A.S."/>
            <person name="Karolchik D."/>
            <person name="Kent W.J."/>
            <person name="Rosenbloom K.R."/>
            <person name="Trumbower H."/>
            <person name="Weirauch M."/>
            <person name="Cooper D.N."/>
            <person name="Stenson P.D."/>
            <person name="Ma B."/>
            <person name="Brent M."/>
            <person name="Arumugam M."/>
            <person name="Shteynberg D."/>
            <person name="Copley R.R."/>
            <person name="Taylor M.S."/>
            <person name="Riethman H."/>
            <person name="Mudunuri U."/>
            <person name="Peterson J."/>
            <person name="Guyer M."/>
            <person name="Felsenfeld A."/>
            <person name="Old S."/>
            <person name="Mockrin S."/>
            <person name="Collins F.S."/>
        </authorList>
    </citation>
    <scope>NUCLEOTIDE SEQUENCE [LARGE SCALE GENOMIC DNA]</scope>
    <source>
        <strain>Brown Norway</strain>
    </source>
</reference>
<reference key="2">
    <citation type="submission" date="2007-02" db="EMBL/GenBank/DDBJ databases">
        <authorList>
            <person name="Hagemann C."/>
            <person name="Stojic J."/>
            <person name="Weigelin B."/>
            <person name="Gerngras S."/>
            <person name="Roosen K."/>
            <person name="Vince G.H."/>
        </authorList>
    </citation>
    <scope>NUCLEOTIDE SEQUENCE [MRNA] OF 158-2395</scope>
</reference>